<feature type="chain" id="PRO_1000146705" description="Formate--tetrahydrofolate ligase">
    <location>
        <begin position="1"/>
        <end position="551"/>
    </location>
</feature>
<feature type="binding site" evidence="1">
    <location>
        <begin position="65"/>
        <end position="72"/>
    </location>
    <ligand>
        <name>ATP</name>
        <dbReference type="ChEBI" id="CHEBI:30616"/>
    </ligand>
</feature>
<sequence length="551" mass="59873">MKTDIEIAREAKLEKITKIAEKIDISEEYVEPYGKYIAKVDLKIWEKVKNNKDGKLILVTAMTPTPAGEGKTTTSIGLSMALNRLGKKSIVTLREPSLGPVFGIKGGAAGGGYSQVLPMENINLHFTGDIHAVSAAHNLISAVIDAHIKFGNELGIDPTRIYWKRTIDMNDRALRNIVVGLGGSANGQPREDGFIITAASEIMAILCLAKDLKDLKERLSNIVVAQSYDKKLIKVKDLKIEGALAVLLKDAIKPNLVQTIENTPAFVHGGPFANIAHGTNSIIATKLALKLSDYVVTEAGFAADLGAEKFLDFVSPTAGYDVNAVVVVATIKALKYHGGVKKDELDNENVEAMLKGMENLRVHVENLKKYNVPVIVALNVFGSDTQRELDEFSKNCEIPHALVYAFEKGGEGAVDLANLVLENIKESQYKPLITSEMSLEEKIETLAKEIYRAGNVIYTDKAKSKLKFLRKHGYDTLPVIVAKTQSSISDDPKKINAPSGYTFTIRDFELSAGAGFIVALAGDIMRMPGLSKIPNAVNIDIDEEGNIIGLS</sequence>
<proteinExistence type="inferred from homology"/>
<keyword id="KW-0067">ATP-binding</keyword>
<keyword id="KW-0436">Ligase</keyword>
<keyword id="KW-0547">Nucleotide-binding</keyword>
<keyword id="KW-0554">One-carbon metabolism</keyword>
<keyword id="KW-1185">Reference proteome</keyword>
<accession>B7IG29</accession>
<reference key="1">
    <citation type="journal article" date="2009" name="J. Bacteriol.">
        <title>The genome of Thermosipho africanus TCF52B: lateral genetic connections to the Firmicutes and Archaea.</title>
        <authorList>
            <person name="Nesboe C.L."/>
            <person name="Bapteste E."/>
            <person name="Curtis B."/>
            <person name="Dahle H."/>
            <person name="Lopez P."/>
            <person name="Macleod D."/>
            <person name="Dlutek M."/>
            <person name="Bowman S."/>
            <person name="Zhaxybayeva O."/>
            <person name="Birkeland N.-K."/>
            <person name="Doolittle W.F."/>
        </authorList>
    </citation>
    <scope>NUCLEOTIDE SEQUENCE [LARGE SCALE GENOMIC DNA]</scope>
    <source>
        <strain>TCF52B</strain>
    </source>
</reference>
<comment type="catalytic activity">
    <reaction evidence="1">
        <text>(6S)-5,6,7,8-tetrahydrofolate + formate + ATP = (6R)-10-formyltetrahydrofolate + ADP + phosphate</text>
        <dbReference type="Rhea" id="RHEA:20221"/>
        <dbReference type="ChEBI" id="CHEBI:15740"/>
        <dbReference type="ChEBI" id="CHEBI:30616"/>
        <dbReference type="ChEBI" id="CHEBI:43474"/>
        <dbReference type="ChEBI" id="CHEBI:57453"/>
        <dbReference type="ChEBI" id="CHEBI:195366"/>
        <dbReference type="ChEBI" id="CHEBI:456216"/>
        <dbReference type="EC" id="6.3.4.3"/>
    </reaction>
</comment>
<comment type="pathway">
    <text evidence="1">One-carbon metabolism; tetrahydrofolate interconversion.</text>
</comment>
<comment type="similarity">
    <text evidence="1">Belongs to the formate--tetrahydrofolate ligase family.</text>
</comment>
<name>FTHS_THEAB</name>
<protein>
    <recommendedName>
        <fullName evidence="1">Formate--tetrahydrofolate ligase</fullName>
        <ecNumber evidence="1">6.3.4.3</ecNumber>
    </recommendedName>
    <alternativeName>
        <fullName evidence="1">Formyltetrahydrofolate synthetase</fullName>
        <shortName evidence="1">FHS</shortName>
        <shortName evidence="1">FTHFS</shortName>
    </alternativeName>
</protein>
<evidence type="ECO:0000255" key="1">
    <source>
        <dbReference type="HAMAP-Rule" id="MF_01543"/>
    </source>
</evidence>
<organism>
    <name type="scientific">Thermosipho africanus (strain TCF52B)</name>
    <dbReference type="NCBI Taxonomy" id="484019"/>
    <lineage>
        <taxon>Bacteria</taxon>
        <taxon>Thermotogati</taxon>
        <taxon>Thermotogota</taxon>
        <taxon>Thermotogae</taxon>
        <taxon>Thermotogales</taxon>
        <taxon>Fervidobacteriaceae</taxon>
        <taxon>Thermosipho</taxon>
    </lineage>
</organism>
<dbReference type="EC" id="6.3.4.3" evidence="1"/>
<dbReference type="EMBL" id="CP001185">
    <property type="protein sequence ID" value="ACJ75043.1"/>
    <property type="molecule type" value="Genomic_DNA"/>
</dbReference>
<dbReference type="RefSeq" id="WP_012579645.1">
    <property type="nucleotide sequence ID" value="NC_011653.1"/>
</dbReference>
<dbReference type="SMR" id="B7IG29"/>
<dbReference type="STRING" id="484019.THA_555"/>
<dbReference type="KEGG" id="taf:THA_555"/>
<dbReference type="eggNOG" id="COG2759">
    <property type="taxonomic scope" value="Bacteria"/>
</dbReference>
<dbReference type="HOGENOM" id="CLU_003601_3_3_0"/>
<dbReference type="OrthoDB" id="9761733at2"/>
<dbReference type="UniPathway" id="UPA00193"/>
<dbReference type="Proteomes" id="UP000002453">
    <property type="component" value="Chromosome"/>
</dbReference>
<dbReference type="GO" id="GO:0005524">
    <property type="term" value="F:ATP binding"/>
    <property type="evidence" value="ECO:0007669"/>
    <property type="project" value="UniProtKB-UniRule"/>
</dbReference>
<dbReference type="GO" id="GO:0004329">
    <property type="term" value="F:formate-tetrahydrofolate ligase activity"/>
    <property type="evidence" value="ECO:0007669"/>
    <property type="project" value="UniProtKB-UniRule"/>
</dbReference>
<dbReference type="GO" id="GO:0035999">
    <property type="term" value="P:tetrahydrofolate interconversion"/>
    <property type="evidence" value="ECO:0007669"/>
    <property type="project" value="UniProtKB-UniRule"/>
</dbReference>
<dbReference type="CDD" id="cd00477">
    <property type="entry name" value="FTHFS"/>
    <property type="match status" value="1"/>
</dbReference>
<dbReference type="FunFam" id="3.30.1510.10:FF:000001">
    <property type="entry name" value="Formate--tetrahydrofolate ligase"/>
    <property type="match status" value="1"/>
</dbReference>
<dbReference type="FunFam" id="3.10.410.10:FF:000001">
    <property type="entry name" value="Putative formate--tetrahydrofolate ligase"/>
    <property type="match status" value="1"/>
</dbReference>
<dbReference type="Gene3D" id="3.30.1510.10">
    <property type="entry name" value="Domain 2, N(10)-formyltetrahydrofolate synthetase"/>
    <property type="match status" value="1"/>
</dbReference>
<dbReference type="Gene3D" id="3.10.410.10">
    <property type="entry name" value="Formyltetrahydrofolate synthetase, domain 3"/>
    <property type="match status" value="1"/>
</dbReference>
<dbReference type="Gene3D" id="3.40.50.300">
    <property type="entry name" value="P-loop containing nucleotide triphosphate hydrolases"/>
    <property type="match status" value="1"/>
</dbReference>
<dbReference type="HAMAP" id="MF_01543">
    <property type="entry name" value="FTHFS"/>
    <property type="match status" value="1"/>
</dbReference>
<dbReference type="InterPro" id="IPR000559">
    <property type="entry name" value="Formate_THF_ligase"/>
</dbReference>
<dbReference type="InterPro" id="IPR020628">
    <property type="entry name" value="Formate_THF_ligase_CS"/>
</dbReference>
<dbReference type="InterPro" id="IPR027417">
    <property type="entry name" value="P-loop_NTPase"/>
</dbReference>
<dbReference type="NCBIfam" id="NF010030">
    <property type="entry name" value="PRK13505.1"/>
    <property type="match status" value="1"/>
</dbReference>
<dbReference type="Pfam" id="PF01268">
    <property type="entry name" value="FTHFS"/>
    <property type="match status" value="1"/>
</dbReference>
<dbReference type="SUPFAM" id="SSF52540">
    <property type="entry name" value="P-loop containing nucleoside triphosphate hydrolases"/>
    <property type="match status" value="1"/>
</dbReference>
<dbReference type="PROSITE" id="PS00721">
    <property type="entry name" value="FTHFS_1"/>
    <property type="match status" value="1"/>
</dbReference>
<gene>
    <name evidence="1" type="primary">fhs</name>
    <name type="ordered locus">THA_555</name>
</gene>